<proteinExistence type="inferred from homology"/>
<comment type="catalytic activity">
    <reaction evidence="1">
        <text>tRNA(Cys) + L-cysteine + ATP = L-cysteinyl-tRNA(Cys) + AMP + diphosphate</text>
        <dbReference type="Rhea" id="RHEA:17773"/>
        <dbReference type="Rhea" id="RHEA-COMP:9661"/>
        <dbReference type="Rhea" id="RHEA-COMP:9679"/>
        <dbReference type="ChEBI" id="CHEBI:30616"/>
        <dbReference type="ChEBI" id="CHEBI:33019"/>
        <dbReference type="ChEBI" id="CHEBI:35235"/>
        <dbReference type="ChEBI" id="CHEBI:78442"/>
        <dbReference type="ChEBI" id="CHEBI:78517"/>
        <dbReference type="ChEBI" id="CHEBI:456215"/>
        <dbReference type="EC" id="6.1.1.16"/>
    </reaction>
</comment>
<comment type="cofactor">
    <cofactor evidence="1">
        <name>Zn(2+)</name>
        <dbReference type="ChEBI" id="CHEBI:29105"/>
    </cofactor>
    <text evidence="1">Binds 1 zinc ion per subunit.</text>
</comment>
<comment type="subunit">
    <text evidence="1">Monomer.</text>
</comment>
<comment type="subcellular location">
    <subcellularLocation>
        <location evidence="1">Cytoplasm</location>
    </subcellularLocation>
</comment>
<comment type="similarity">
    <text evidence="1">Belongs to the class-I aminoacyl-tRNA synthetase family.</text>
</comment>
<accession>A5VPL3</accession>
<keyword id="KW-0030">Aminoacyl-tRNA synthetase</keyword>
<keyword id="KW-0067">ATP-binding</keyword>
<keyword id="KW-0963">Cytoplasm</keyword>
<keyword id="KW-0436">Ligase</keyword>
<keyword id="KW-0479">Metal-binding</keyword>
<keyword id="KW-0547">Nucleotide-binding</keyword>
<keyword id="KW-0648">Protein biosynthesis</keyword>
<keyword id="KW-0862">Zinc</keyword>
<sequence length="506" mass="56264">MPDTAPQLRLYNTLTRTKEAFAPIDAKNVRMYVCGPTVYDFAHIGNARPVIVFDVLFRLLRHVYGAQHVTYARNITDVDDKINARAARDYPDLPFNEAIRKVTESTNAQFQADVTALGNLQPTVQPRATEHMDEMRAMIDRLVQRGVAYVAQDHVLFSPSAMDARKGPRYGALARRSLDEMLAGARVDVASYKRDEMDFVLWKPSKKGEPGWPSPAGIETLGRPGWHIECSAMSMAKLLEPFGGGLKCDDPERNQFDIHGGGIDLVFPHHENEIAQSCCALGTERMANIWMHNGFLQVEGQKMSKSLGNFITIRDVLNDGLPQLGEWGDNTVRDRWAGLAARLSMLQTHYREPINWTAQRLAESADELHRWYGLLRDEGFGAPEKLSHASAVAAALCDDLNSWAAITALRQAFKVRDVAALGEGMALMGLLDPYFVTASDVPIFARADVDASAIAARIAERLNFINAKNWAEADRIRDELLQEGVQLKDSKDSATGERITTWDVVG</sequence>
<dbReference type="EC" id="6.1.1.16" evidence="1"/>
<dbReference type="EMBL" id="CP000708">
    <property type="protein sequence ID" value="ABQ61972.1"/>
    <property type="molecule type" value="Genomic_DNA"/>
</dbReference>
<dbReference type="RefSeq" id="WP_006012016.1">
    <property type="nucleotide sequence ID" value="NC_009505.1"/>
</dbReference>
<dbReference type="SMR" id="A5VPL3"/>
<dbReference type="GeneID" id="45124126"/>
<dbReference type="KEGG" id="bov:BOV_0670"/>
<dbReference type="HOGENOM" id="CLU_013528_0_1_5"/>
<dbReference type="PhylomeDB" id="A5VPL3"/>
<dbReference type="Proteomes" id="UP000006383">
    <property type="component" value="Chromosome I"/>
</dbReference>
<dbReference type="GO" id="GO:0005829">
    <property type="term" value="C:cytosol"/>
    <property type="evidence" value="ECO:0007669"/>
    <property type="project" value="TreeGrafter"/>
</dbReference>
<dbReference type="GO" id="GO:0005524">
    <property type="term" value="F:ATP binding"/>
    <property type="evidence" value="ECO:0007669"/>
    <property type="project" value="UniProtKB-UniRule"/>
</dbReference>
<dbReference type="GO" id="GO:0004817">
    <property type="term" value="F:cysteine-tRNA ligase activity"/>
    <property type="evidence" value="ECO:0007669"/>
    <property type="project" value="UniProtKB-UniRule"/>
</dbReference>
<dbReference type="GO" id="GO:0008270">
    <property type="term" value="F:zinc ion binding"/>
    <property type="evidence" value="ECO:0007669"/>
    <property type="project" value="UniProtKB-UniRule"/>
</dbReference>
<dbReference type="GO" id="GO:0006423">
    <property type="term" value="P:cysteinyl-tRNA aminoacylation"/>
    <property type="evidence" value="ECO:0007669"/>
    <property type="project" value="UniProtKB-UniRule"/>
</dbReference>
<dbReference type="CDD" id="cd00672">
    <property type="entry name" value="CysRS_core"/>
    <property type="match status" value="1"/>
</dbReference>
<dbReference type="Gene3D" id="1.20.120.1910">
    <property type="entry name" value="Cysteine-tRNA ligase, C-terminal anti-codon recognition domain"/>
    <property type="match status" value="1"/>
</dbReference>
<dbReference type="Gene3D" id="3.40.50.620">
    <property type="entry name" value="HUPs"/>
    <property type="match status" value="1"/>
</dbReference>
<dbReference type="HAMAP" id="MF_00041">
    <property type="entry name" value="Cys_tRNA_synth"/>
    <property type="match status" value="1"/>
</dbReference>
<dbReference type="InterPro" id="IPR015803">
    <property type="entry name" value="Cys-tRNA-ligase"/>
</dbReference>
<dbReference type="InterPro" id="IPR024909">
    <property type="entry name" value="Cys-tRNA/MSH_ligase"/>
</dbReference>
<dbReference type="InterPro" id="IPR014729">
    <property type="entry name" value="Rossmann-like_a/b/a_fold"/>
</dbReference>
<dbReference type="InterPro" id="IPR032678">
    <property type="entry name" value="tRNA-synt_1_cat_dom"/>
</dbReference>
<dbReference type="InterPro" id="IPR009080">
    <property type="entry name" value="tRNAsynth_Ia_anticodon-bd"/>
</dbReference>
<dbReference type="NCBIfam" id="TIGR00435">
    <property type="entry name" value="cysS"/>
    <property type="match status" value="1"/>
</dbReference>
<dbReference type="PANTHER" id="PTHR10890:SF3">
    <property type="entry name" value="CYSTEINE--TRNA LIGASE, CYTOPLASMIC"/>
    <property type="match status" value="1"/>
</dbReference>
<dbReference type="PANTHER" id="PTHR10890">
    <property type="entry name" value="CYSTEINYL-TRNA SYNTHETASE"/>
    <property type="match status" value="1"/>
</dbReference>
<dbReference type="Pfam" id="PF01406">
    <property type="entry name" value="tRNA-synt_1e"/>
    <property type="match status" value="1"/>
</dbReference>
<dbReference type="PRINTS" id="PR00983">
    <property type="entry name" value="TRNASYNTHCYS"/>
</dbReference>
<dbReference type="SUPFAM" id="SSF47323">
    <property type="entry name" value="Anticodon-binding domain of a subclass of class I aminoacyl-tRNA synthetases"/>
    <property type="match status" value="1"/>
</dbReference>
<dbReference type="SUPFAM" id="SSF52374">
    <property type="entry name" value="Nucleotidylyl transferase"/>
    <property type="match status" value="1"/>
</dbReference>
<name>SYC_BRUO2</name>
<feature type="chain" id="PRO_0000332795" description="Cysteine--tRNA ligase">
    <location>
        <begin position="1"/>
        <end position="506"/>
    </location>
</feature>
<feature type="short sequence motif" description="'HIGH' region">
    <location>
        <begin position="36"/>
        <end position="46"/>
    </location>
</feature>
<feature type="short sequence motif" description="'KMSKS' region">
    <location>
        <begin position="302"/>
        <end position="306"/>
    </location>
</feature>
<feature type="binding site" evidence="1">
    <location>
        <position position="34"/>
    </location>
    <ligand>
        <name>Zn(2+)</name>
        <dbReference type="ChEBI" id="CHEBI:29105"/>
    </ligand>
</feature>
<feature type="binding site" evidence="1">
    <location>
        <position position="230"/>
    </location>
    <ligand>
        <name>Zn(2+)</name>
        <dbReference type="ChEBI" id="CHEBI:29105"/>
    </ligand>
</feature>
<feature type="binding site" evidence="1">
    <location>
        <position position="269"/>
    </location>
    <ligand>
        <name>Zn(2+)</name>
        <dbReference type="ChEBI" id="CHEBI:29105"/>
    </ligand>
</feature>
<feature type="binding site" evidence="1">
    <location>
        <position position="273"/>
    </location>
    <ligand>
        <name>Zn(2+)</name>
        <dbReference type="ChEBI" id="CHEBI:29105"/>
    </ligand>
</feature>
<feature type="binding site" evidence="1">
    <location>
        <position position="305"/>
    </location>
    <ligand>
        <name>ATP</name>
        <dbReference type="ChEBI" id="CHEBI:30616"/>
    </ligand>
</feature>
<reference key="1">
    <citation type="journal article" date="2009" name="PLoS ONE">
        <title>Genome degradation in Brucella ovis corresponds with narrowing of its host range and tissue tropism.</title>
        <authorList>
            <person name="Tsolis R.M."/>
            <person name="Seshadri R."/>
            <person name="Santos R.L."/>
            <person name="Sangari F.J."/>
            <person name="Lobo J.M."/>
            <person name="de Jong M.F."/>
            <person name="Ren Q."/>
            <person name="Myers G."/>
            <person name="Brinkac L.M."/>
            <person name="Nelson W.C."/>
            <person name="Deboy R.T."/>
            <person name="Angiuoli S."/>
            <person name="Khouri H."/>
            <person name="Dimitrov G."/>
            <person name="Robinson J.R."/>
            <person name="Mulligan S."/>
            <person name="Walker R.L."/>
            <person name="Elzer P.E."/>
            <person name="Hassan K.A."/>
            <person name="Paulsen I.T."/>
        </authorList>
    </citation>
    <scope>NUCLEOTIDE SEQUENCE [LARGE SCALE GENOMIC DNA]</scope>
    <source>
        <strain>ATCC 25840 / 63/290 / NCTC 10512</strain>
    </source>
</reference>
<protein>
    <recommendedName>
        <fullName evidence="1">Cysteine--tRNA ligase</fullName>
        <ecNumber evidence="1">6.1.1.16</ecNumber>
    </recommendedName>
    <alternativeName>
        <fullName evidence="1">Cysteinyl-tRNA synthetase</fullName>
        <shortName evidence="1">CysRS</shortName>
    </alternativeName>
</protein>
<organism>
    <name type="scientific">Brucella ovis (strain ATCC 25840 / 63/290 / NCTC 10512)</name>
    <dbReference type="NCBI Taxonomy" id="444178"/>
    <lineage>
        <taxon>Bacteria</taxon>
        <taxon>Pseudomonadati</taxon>
        <taxon>Pseudomonadota</taxon>
        <taxon>Alphaproteobacteria</taxon>
        <taxon>Hyphomicrobiales</taxon>
        <taxon>Brucellaceae</taxon>
        <taxon>Brucella/Ochrobactrum group</taxon>
        <taxon>Brucella</taxon>
    </lineage>
</organism>
<evidence type="ECO:0000255" key="1">
    <source>
        <dbReference type="HAMAP-Rule" id="MF_00041"/>
    </source>
</evidence>
<gene>
    <name evidence="1" type="primary">cysS</name>
    <name type="ordered locus">BOV_0670</name>
</gene>